<keyword id="KW-0021">Allosteric enzyme</keyword>
<keyword id="KW-0963">Cytoplasm</keyword>
<keyword id="KW-0378">Hydrolase</keyword>
<keyword id="KW-0479">Metal-binding</keyword>
<keyword id="KW-0645">Protease</keyword>
<keyword id="KW-0915">Sodium</keyword>
<keyword id="KW-0888">Threonine protease</keyword>
<protein>
    <recommendedName>
        <fullName evidence="1">ATP-dependent protease subunit HslV</fullName>
        <ecNumber evidence="1">3.4.25.2</ecNumber>
    </recommendedName>
</protein>
<comment type="function">
    <text evidence="1">Protease subunit of a proteasome-like degradation complex believed to be a general protein degrading machinery.</text>
</comment>
<comment type="catalytic activity">
    <reaction evidence="1">
        <text>ATP-dependent cleavage of peptide bonds with broad specificity.</text>
        <dbReference type="EC" id="3.4.25.2"/>
    </reaction>
</comment>
<comment type="activity regulation">
    <text evidence="1">Allosterically activated by HslU binding.</text>
</comment>
<comment type="subunit">
    <text evidence="1">A double ring-shaped homohexamer of HslV is capped on each side by a ring-shaped HslU homohexamer. The assembly of the HslU/HslV complex is dependent on binding of ATP.</text>
</comment>
<comment type="subcellular location">
    <subcellularLocation>
        <location evidence="1">Cytoplasm</location>
    </subcellularLocation>
</comment>
<comment type="similarity">
    <text evidence="1">Belongs to the peptidase T1B family. HslV subfamily.</text>
</comment>
<organism>
    <name type="scientific">Yersinia pestis bv. Antiqua (strain Angola)</name>
    <dbReference type="NCBI Taxonomy" id="349746"/>
    <lineage>
        <taxon>Bacteria</taxon>
        <taxon>Pseudomonadati</taxon>
        <taxon>Pseudomonadota</taxon>
        <taxon>Gammaproteobacteria</taxon>
        <taxon>Enterobacterales</taxon>
        <taxon>Yersiniaceae</taxon>
        <taxon>Yersinia</taxon>
    </lineage>
</organism>
<proteinExistence type="inferred from homology"/>
<reference key="1">
    <citation type="journal article" date="2010" name="J. Bacteriol.">
        <title>Genome sequence of the deep-rooted Yersinia pestis strain Angola reveals new insights into the evolution and pangenome of the plague bacterium.</title>
        <authorList>
            <person name="Eppinger M."/>
            <person name="Worsham P.L."/>
            <person name="Nikolich M.P."/>
            <person name="Riley D.R."/>
            <person name="Sebastian Y."/>
            <person name="Mou S."/>
            <person name="Achtman M."/>
            <person name="Lindler L.E."/>
            <person name="Ravel J."/>
        </authorList>
    </citation>
    <scope>NUCLEOTIDE SEQUENCE [LARGE SCALE GENOMIC DNA]</scope>
    <source>
        <strain>Angola</strain>
    </source>
</reference>
<feature type="chain" id="PRO_1000100927" description="ATP-dependent protease subunit HslV">
    <location>
        <begin position="1"/>
        <end position="174"/>
    </location>
</feature>
<feature type="active site" evidence="1">
    <location>
        <position position="2"/>
    </location>
</feature>
<feature type="binding site" evidence="1">
    <location>
        <position position="157"/>
    </location>
    <ligand>
        <name>Na(+)</name>
        <dbReference type="ChEBI" id="CHEBI:29101"/>
    </ligand>
</feature>
<feature type="binding site" evidence="1">
    <location>
        <position position="160"/>
    </location>
    <ligand>
        <name>Na(+)</name>
        <dbReference type="ChEBI" id="CHEBI:29101"/>
    </ligand>
</feature>
<feature type="binding site" evidence="1">
    <location>
        <position position="163"/>
    </location>
    <ligand>
        <name>Na(+)</name>
        <dbReference type="ChEBI" id="CHEBI:29101"/>
    </ligand>
</feature>
<dbReference type="EC" id="3.4.25.2" evidence="1"/>
<dbReference type="EMBL" id="CP000901">
    <property type="protein sequence ID" value="ABX85686.1"/>
    <property type="molecule type" value="Genomic_DNA"/>
</dbReference>
<dbReference type="RefSeq" id="WP_002208942.1">
    <property type="nucleotide sequence ID" value="NZ_CP009935.1"/>
</dbReference>
<dbReference type="SMR" id="A9R6C8"/>
<dbReference type="MEROPS" id="T01.006"/>
<dbReference type="GeneID" id="97458253"/>
<dbReference type="KEGG" id="ypg:YpAngola_A0113"/>
<dbReference type="PATRIC" id="fig|349746.12.peg.1057"/>
<dbReference type="GO" id="GO:0009376">
    <property type="term" value="C:HslUV protease complex"/>
    <property type="evidence" value="ECO:0007669"/>
    <property type="project" value="UniProtKB-UniRule"/>
</dbReference>
<dbReference type="GO" id="GO:0005839">
    <property type="term" value="C:proteasome core complex"/>
    <property type="evidence" value="ECO:0007669"/>
    <property type="project" value="InterPro"/>
</dbReference>
<dbReference type="GO" id="GO:0046872">
    <property type="term" value="F:metal ion binding"/>
    <property type="evidence" value="ECO:0007669"/>
    <property type="project" value="UniProtKB-KW"/>
</dbReference>
<dbReference type="GO" id="GO:0004298">
    <property type="term" value="F:threonine-type endopeptidase activity"/>
    <property type="evidence" value="ECO:0007669"/>
    <property type="project" value="UniProtKB-KW"/>
</dbReference>
<dbReference type="GO" id="GO:0051603">
    <property type="term" value="P:proteolysis involved in protein catabolic process"/>
    <property type="evidence" value="ECO:0007669"/>
    <property type="project" value="InterPro"/>
</dbReference>
<dbReference type="CDD" id="cd01913">
    <property type="entry name" value="protease_HslV"/>
    <property type="match status" value="1"/>
</dbReference>
<dbReference type="FunFam" id="3.60.20.10:FF:000002">
    <property type="entry name" value="ATP-dependent protease subunit HslV"/>
    <property type="match status" value="1"/>
</dbReference>
<dbReference type="Gene3D" id="3.60.20.10">
    <property type="entry name" value="Glutamine Phosphoribosylpyrophosphate, subunit 1, domain 1"/>
    <property type="match status" value="1"/>
</dbReference>
<dbReference type="HAMAP" id="MF_00248">
    <property type="entry name" value="HslV"/>
    <property type="match status" value="1"/>
</dbReference>
<dbReference type="InterPro" id="IPR022281">
    <property type="entry name" value="ATP-dep_Prtase_HsIV_su"/>
</dbReference>
<dbReference type="InterPro" id="IPR029055">
    <property type="entry name" value="Ntn_hydrolases_N"/>
</dbReference>
<dbReference type="InterPro" id="IPR001353">
    <property type="entry name" value="Proteasome_sua/b"/>
</dbReference>
<dbReference type="InterPro" id="IPR023333">
    <property type="entry name" value="Proteasome_suB-type"/>
</dbReference>
<dbReference type="NCBIfam" id="TIGR03692">
    <property type="entry name" value="ATP_dep_HslV"/>
    <property type="match status" value="1"/>
</dbReference>
<dbReference type="NCBIfam" id="NF003964">
    <property type="entry name" value="PRK05456.1"/>
    <property type="match status" value="1"/>
</dbReference>
<dbReference type="PANTHER" id="PTHR32194:SF0">
    <property type="entry name" value="ATP-DEPENDENT PROTEASE SUBUNIT HSLV"/>
    <property type="match status" value="1"/>
</dbReference>
<dbReference type="PANTHER" id="PTHR32194">
    <property type="entry name" value="METALLOPROTEASE TLDD"/>
    <property type="match status" value="1"/>
</dbReference>
<dbReference type="Pfam" id="PF00227">
    <property type="entry name" value="Proteasome"/>
    <property type="match status" value="1"/>
</dbReference>
<dbReference type="PIRSF" id="PIRSF039093">
    <property type="entry name" value="HslV"/>
    <property type="match status" value="1"/>
</dbReference>
<dbReference type="SUPFAM" id="SSF56235">
    <property type="entry name" value="N-terminal nucleophile aminohydrolases (Ntn hydrolases)"/>
    <property type="match status" value="1"/>
</dbReference>
<dbReference type="PROSITE" id="PS51476">
    <property type="entry name" value="PROTEASOME_BETA_2"/>
    <property type="match status" value="1"/>
</dbReference>
<sequence length="174" mass="18895">MTTIVSVRRDGHVVIGGDGQVTLGNTVMKGNAKKVRRLYNNKVIAGFAGGTADAFTLFELFERKLEMHQGHLTKAAVELAKDWRTDRMLRKLEALLAVADETASLIITGNGDVVQPEDDLIAIGSGGPYAQSAARALLENTELGARDIVEKSLSIAGDICIYTNRFQTIEELTY</sequence>
<accession>A9R6C8</accession>
<name>HSLV_YERPG</name>
<gene>
    <name evidence="1" type="primary">hslV</name>
    <name type="ordered locus">YpAngola_A0113</name>
</gene>
<evidence type="ECO:0000255" key="1">
    <source>
        <dbReference type="HAMAP-Rule" id="MF_00248"/>
    </source>
</evidence>